<sequence>MSKIDSIIEMIEGLNVLELVELKKKMEEKWGVTAAAPVMAMGAAMPVAAAGDGAAAAAPVEEKTEFDVILKEAGPNKIQVIKVVRELTSLGLKEAKDLVEGAPKPVREGVSKEEAEAAKAKLTEAGAVVEIK</sequence>
<feature type="chain" id="PRO_1000079785" description="Large ribosomal subunit protein bL12">
    <location>
        <begin position="1"/>
        <end position="132"/>
    </location>
</feature>
<organism>
    <name type="scientific">Chloroflexus aurantiacus (strain ATCC 29366 / DSM 635 / J-10-fl)</name>
    <dbReference type="NCBI Taxonomy" id="324602"/>
    <lineage>
        <taxon>Bacteria</taxon>
        <taxon>Bacillati</taxon>
        <taxon>Chloroflexota</taxon>
        <taxon>Chloroflexia</taxon>
        <taxon>Chloroflexales</taxon>
        <taxon>Chloroflexineae</taxon>
        <taxon>Chloroflexaceae</taxon>
        <taxon>Chloroflexus</taxon>
    </lineage>
</organism>
<name>RL7_CHLAA</name>
<dbReference type="EMBL" id="CP000909">
    <property type="protein sequence ID" value="ABY35399.1"/>
    <property type="molecule type" value="Genomic_DNA"/>
</dbReference>
<dbReference type="RefSeq" id="WP_012258053.1">
    <property type="nucleotide sequence ID" value="NC_010175.1"/>
</dbReference>
<dbReference type="RefSeq" id="YP_001635788.1">
    <property type="nucleotide sequence ID" value="NC_010175.1"/>
</dbReference>
<dbReference type="SMR" id="A9WFP9"/>
<dbReference type="FunCoup" id="A9WFP9">
    <property type="interactions" value="470"/>
</dbReference>
<dbReference type="STRING" id="324602.Caur_2188"/>
<dbReference type="EnsemblBacteria" id="ABY35399">
    <property type="protein sequence ID" value="ABY35399"/>
    <property type="gene ID" value="Caur_2188"/>
</dbReference>
<dbReference type="KEGG" id="cau:Caur_2188"/>
<dbReference type="PATRIC" id="fig|324602.8.peg.2475"/>
<dbReference type="eggNOG" id="COG0222">
    <property type="taxonomic scope" value="Bacteria"/>
</dbReference>
<dbReference type="HOGENOM" id="CLU_086499_3_2_0"/>
<dbReference type="InParanoid" id="A9WFP9"/>
<dbReference type="Proteomes" id="UP000002008">
    <property type="component" value="Chromosome"/>
</dbReference>
<dbReference type="GO" id="GO:0022625">
    <property type="term" value="C:cytosolic large ribosomal subunit"/>
    <property type="evidence" value="ECO:0000318"/>
    <property type="project" value="GO_Central"/>
</dbReference>
<dbReference type="GO" id="GO:0003729">
    <property type="term" value="F:mRNA binding"/>
    <property type="evidence" value="ECO:0000318"/>
    <property type="project" value="GO_Central"/>
</dbReference>
<dbReference type="GO" id="GO:0003735">
    <property type="term" value="F:structural constituent of ribosome"/>
    <property type="evidence" value="ECO:0000318"/>
    <property type="project" value="GO_Central"/>
</dbReference>
<dbReference type="GO" id="GO:0006412">
    <property type="term" value="P:translation"/>
    <property type="evidence" value="ECO:0000318"/>
    <property type="project" value="GO_Central"/>
</dbReference>
<dbReference type="CDD" id="cd00387">
    <property type="entry name" value="Ribosomal_L7_L12"/>
    <property type="match status" value="1"/>
</dbReference>
<dbReference type="FunFam" id="1.20.5.710:FF:000007">
    <property type="entry name" value="50S ribosomal protein L7/L12"/>
    <property type="match status" value="1"/>
</dbReference>
<dbReference type="FunFam" id="3.30.1390.10:FF:000001">
    <property type="entry name" value="50S ribosomal protein L7/L12"/>
    <property type="match status" value="1"/>
</dbReference>
<dbReference type="Gene3D" id="3.30.1390.10">
    <property type="match status" value="1"/>
</dbReference>
<dbReference type="Gene3D" id="1.20.5.710">
    <property type="entry name" value="Single helix bin"/>
    <property type="match status" value="1"/>
</dbReference>
<dbReference type="HAMAP" id="MF_00368">
    <property type="entry name" value="Ribosomal_bL12"/>
    <property type="match status" value="1"/>
</dbReference>
<dbReference type="InterPro" id="IPR000206">
    <property type="entry name" value="Ribosomal_bL12"/>
</dbReference>
<dbReference type="InterPro" id="IPR013823">
    <property type="entry name" value="Ribosomal_bL12_C"/>
</dbReference>
<dbReference type="InterPro" id="IPR014719">
    <property type="entry name" value="Ribosomal_bL12_C/ClpS-like"/>
</dbReference>
<dbReference type="InterPro" id="IPR008932">
    <property type="entry name" value="Ribosomal_bL12_oligo"/>
</dbReference>
<dbReference type="InterPro" id="IPR036235">
    <property type="entry name" value="Ribosomal_bL12_oligo_N_sf"/>
</dbReference>
<dbReference type="NCBIfam" id="TIGR00855">
    <property type="entry name" value="L12"/>
    <property type="match status" value="1"/>
</dbReference>
<dbReference type="PANTHER" id="PTHR45987">
    <property type="entry name" value="39S RIBOSOMAL PROTEIN L12"/>
    <property type="match status" value="1"/>
</dbReference>
<dbReference type="PANTHER" id="PTHR45987:SF4">
    <property type="entry name" value="LARGE RIBOSOMAL SUBUNIT PROTEIN BL12M"/>
    <property type="match status" value="1"/>
</dbReference>
<dbReference type="Pfam" id="PF00542">
    <property type="entry name" value="Ribosomal_L12"/>
    <property type="match status" value="1"/>
</dbReference>
<dbReference type="Pfam" id="PF16320">
    <property type="entry name" value="Ribosomal_L12_N"/>
    <property type="match status" value="1"/>
</dbReference>
<dbReference type="SUPFAM" id="SSF54736">
    <property type="entry name" value="ClpS-like"/>
    <property type="match status" value="1"/>
</dbReference>
<dbReference type="SUPFAM" id="SSF48300">
    <property type="entry name" value="Ribosomal protein L7/12, oligomerisation (N-terminal) domain"/>
    <property type="match status" value="1"/>
</dbReference>
<gene>
    <name evidence="1" type="primary">rplL</name>
    <name type="ordered locus">Caur_2188</name>
</gene>
<protein>
    <recommendedName>
        <fullName evidence="1">Large ribosomal subunit protein bL12</fullName>
    </recommendedName>
    <alternativeName>
        <fullName evidence="2">50S ribosomal protein L7/L12</fullName>
    </alternativeName>
</protein>
<keyword id="KW-1185">Reference proteome</keyword>
<keyword id="KW-0687">Ribonucleoprotein</keyword>
<keyword id="KW-0689">Ribosomal protein</keyword>
<reference key="1">
    <citation type="journal article" date="2011" name="BMC Genomics">
        <title>Complete genome sequence of the filamentous anoxygenic phototrophic bacterium Chloroflexus aurantiacus.</title>
        <authorList>
            <person name="Tang K.H."/>
            <person name="Barry K."/>
            <person name="Chertkov O."/>
            <person name="Dalin E."/>
            <person name="Han C.S."/>
            <person name="Hauser L.J."/>
            <person name="Honchak B.M."/>
            <person name="Karbach L.E."/>
            <person name="Land M.L."/>
            <person name="Lapidus A."/>
            <person name="Larimer F.W."/>
            <person name="Mikhailova N."/>
            <person name="Pitluck S."/>
            <person name="Pierson B.K."/>
            <person name="Blankenship R.E."/>
        </authorList>
    </citation>
    <scope>NUCLEOTIDE SEQUENCE [LARGE SCALE GENOMIC DNA]</scope>
    <source>
        <strain>ATCC 29366 / DSM 635 / J-10-fl</strain>
    </source>
</reference>
<accession>A9WFP9</accession>
<proteinExistence type="inferred from homology"/>
<comment type="function">
    <text evidence="1">Forms part of the ribosomal stalk which helps the ribosome interact with GTP-bound translation factors. Is thus essential for accurate translation.</text>
</comment>
<comment type="subunit">
    <text evidence="1">Homodimer. Part of the ribosomal stalk of the 50S ribosomal subunit. Forms a multimeric L10(L12)X complex, where L10 forms an elongated spine to which 2 to 4 L12 dimers bind in a sequential fashion. Binds GTP-bound translation factors.</text>
</comment>
<comment type="similarity">
    <text evidence="1">Belongs to the bacterial ribosomal protein bL12 family.</text>
</comment>
<evidence type="ECO:0000255" key="1">
    <source>
        <dbReference type="HAMAP-Rule" id="MF_00368"/>
    </source>
</evidence>
<evidence type="ECO:0000305" key="2"/>